<accession>D8MIA0</accession>
<protein>
    <recommendedName>
        <fullName evidence="5">Snake venom serine protease homolog rhinocerase 2</fullName>
        <shortName evidence="5">BG-RHIN2</shortName>
    </recommendedName>
    <alternativeName>
        <fullName>Venom serine proteinase-like protein 2</fullName>
    </alternativeName>
</protein>
<proteinExistence type="evidence at protein level"/>
<evidence type="ECO:0000250" key="1">
    <source>
        <dbReference type="UniProtKB" id="Q6T6S7"/>
    </source>
</evidence>
<evidence type="ECO:0000255" key="2"/>
<evidence type="ECO:0000255" key="3">
    <source>
        <dbReference type="PROSITE-ProRule" id="PRU00274"/>
    </source>
</evidence>
<evidence type="ECO:0000269" key="4">
    <source>
    </source>
</evidence>
<evidence type="ECO:0000303" key="5">
    <source>
    </source>
</evidence>
<evidence type="ECO:0000305" key="6"/>
<evidence type="ECO:0000305" key="7">
    <source>
    </source>
</evidence>
<evidence type="ECO:0000305" key="8">
    <source>
    </source>
</evidence>
<evidence type="ECO:0000312" key="9">
    <source>
        <dbReference type="EMBL" id="CBM40645.1"/>
    </source>
</evidence>
<reference evidence="9" key="1">
    <citation type="journal article" date="2011" name="PLoS ONE">
        <title>Evolutionary analysis of novel serine proteases in the venom gland transcriptome of Bitis gabonica rhinoceros.</title>
        <authorList>
            <person name="Vaiyapuri S."/>
            <person name="Wagstaff S.C."/>
            <person name="Harrison R.A."/>
            <person name="Gibbins J.M."/>
            <person name="Hutchinson E.G."/>
        </authorList>
    </citation>
    <scope>NUCLEOTIDE SEQUENCE [GENOMIC DNA]</scope>
    <scope>ISOLATION</scope>
    <source>
        <tissue>Venom</tissue>
        <tissue>Venom gland</tissue>
    </source>
</reference>
<reference key="2">
    <citation type="journal article" date="2007" name="J. Proteome Res.">
        <title>Snake venomics of Bitis species reveals large intragenus venom toxin composition variation: application to taxonomy of congeneric taxa.</title>
        <authorList>
            <person name="Calvete J.J."/>
            <person name="Escolano J."/>
            <person name="Sanz L."/>
        </authorList>
    </citation>
    <scope>PROTEIN SEQUENCE OF 24-38</scope>
    <scope>SUBCELLULAR LOCATION</scope>
    <source>
        <tissue>Venom</tissue>
    </source>
</reference>
<feature type="signal peptide" evidence="2">
    <location>
        <begin position="1" status="less than"/>
        <end position="17"/>
    </location>
</feature>
<feature type="propeptide" id="PRO_0000455648" evidence="7">
    <location>
        <begin position="18"/>
        <end position="23"/>
    </location>
</feature>
<feature type="chain" id="PRO_5003117877" description="Snake venom serine protease homolog rhinocerase 2" evidence="1">
    <location>
        <begin position="24"/>
        <end position="259"/>
    </location>
</feature>
<feature type="domain" description="Peptidase S1" evidence="3">
    <location>
        <begin position="24"/>
        <end position="250"/>
    </location>
</feature>
<feature type="glycosylation site" description="N-linked (GlcNAc...) asparagine" evidence="2">
    <location>
        <position position="252"/>
    </location>
</feature>
<feature type="disulfide bond" evidence="3">
    <location>
        <begin position="30"/>
        <end position="164"/>
    </location>
</feature>
<feature type="disulfide bond" evidence="3">
    <location>
        <begin position="51"/>
        <end position="67"/>
    </location>
</feature>
<feature type="disulfide bond" evidence="3">
    <location>
        <begin position="99"/>
        <end position="257"/>
    </location>
</feature>
<feature type="disulfide bond" evidence="3">
    <location>
        <begin position="143"/>
        <end position="211"/>
    </location>
</feature>
<feature type="disulfide bond" evidence="3">
    <location>
        <begin position="175"/>
        <end position="190"/>
    </location>
</feature>
<feature type="disulfide bond" evidence="3">
    <location>
        <begin position="201"/>
        <end position="226"/>
    </location>
</feature>
<feature type="non-terminal residue" evidence="8">
    <location>
        <position position="1"/>
    </location>
</feature>
<name>VSPH2_BITRH</name>
<dbReference type="EMBL" id="FN868645">
    <property type="protein sequence ID" value="CBM40645.1"/>
    <property type="molecule type" value="Genomic_DNA"/>
</dbReference>
<dbReference type="SMR" id="D8MIA0"/>
<dbReference type="MEROPS" id="S01.509"/>
<dbReference type="GO" id="GO:0005576">
    <property type="term" value="C:extracellular region"/>
    <property type="evidence" value="ECO:0007669"/>
    <property type="project" value="UniProtKB-SubCell"/>
</dbReference>
<dbReference type="GO" id="GO:0030141">
    <property type="term" value="C:secretory granule"/>
    <property type="evidence" value="ECO:0007669"/>
    <property type="project" value="TreeGrafter"/>
</dbReference>
<dbReference type="GO" id="GO:0004252">
    <property type="term" value="F:serine-type endopeptidase activity"/>
    <property type="evidence" value="ECO:0007669"/>
    <property type="project" value="InterPro"/>
</dbReference>
<dbReference type="GO" id="GO:0090729">
    <property type="term" value="F:toxin activity"/>
    <property type="evidence" value="ECO:0007669"/>
    <property type="project" value="UniProtKB-KW"/>
</dbReference>
<dbReference type="GO" id="GO:0006508">
    <property type="term" value="P:proteolysis"/>
    <property type="evidence" value="ECO:0007669"/>
    <property type="project" value="InterPro"/>
</dbReference>
<dbReference type="CDD" id="cd00190">
    <property type="entry name" value="Tryp_SPc"/>
    <property type="match status" value="1"/>
</dbReference>
<dbReference type="FunFam" id="2.40.10.10:FF:000158">
    <property type="entry name" value="Thrombin-like enzyme saxthrombin"/>
    <property type="match status" value="1"/>
</dbReference>
<dbReference type="Gene3D" id="2.40.10.10">
    <property type="entry name" value="Trypsin-like serine proteases"/>
    <property type="match status" value="2"/>
</dbReference>
<dbReference type="InterPro" id="IPR009003">
    <property type="entry name" value="Peptidase_S1_PA"/>
</dbReference>
<dbReference type="InterPro" id="IPR043504">
    <property type="entry name" value="Peptidase_S1_PA_chymotrypsin"/>
</dbReference>
<dbReference type="InterPro" id="IPR001314">
    <property type="entry name" value="Peptidase_S1A"/>
</dbReference>
<dbReference type="InterPro" id="IPR001254">
    <property type="entry name" value="Trypsin_dom"/>
</dbReference>
<dbReference type="PANTHER" id="PTHR24271:SF47">
    <property type="entry name" value="KALLIKREIN-1"/>
    <property type="match status" value="1"/>
</dbReference>
<dbReference type="PANTHER" id="PTHR24271">
    <property type="entry name" value="KALLIKREIN-RELATED"/>
    <property type="match status" value="1"/>
</dbReference>
<dbReference type="Pfam" id="PF00089">
    <property type="entry name" value="Trypsin"/>
    <property type="match status" value="1"/>
</dbReference>
<dbReference type="PRINTS" id="PR00722">
    <property type="entry name" value="CHYMOTRYPSIN"/>
</dbReference>
<dbReference type="SMART" id="SM00020">
    <property type="entry name" value="Tryp_SPc"/>
    <property type="match status" value="1"/>
</dbReference>
<dbReference type="SUPFAM" id="SSF50494">
    <property type="entry name" value="Trypsin-like serine proteases"/>
    <property type="match status" value="1"/>
</dbReference>
<dbReference type="PROSITE" id="PS50240">
    <property type="entry name" value="TRYPSIN_DOM"/>
    <property type="match status" value="1"/>
</dbReference>
<keyword id="KW-0903">Direct protein sequencing</keyword>
<keyword id="KW-1015">Disulfide bond</keyword>
<keyword id="KW-0325">Glycoprotein</keyword>
<keyword id="KW-1199">Hemostasis impairing toxin</keyword>
<keyword id="KW-0964">Secreted</keyword>
<keyword id="KW-0721">Serine protease homolog</keyword>
<keyword id="KW-0732">Signal</keyword>
<keyword id="KW-0800">Toxin</keyword>
<sequence length="259" mass="28851">VLIRVLANLLLLQLSYAQESSELVIGGDECDINEHPFLVALHTARSKRFHCAGTLLNKEWVLTAARCDRKNIRIKFGVHNKNVQNEDEEMRVPKEKHFCVSSKTYTRWDKDIMLIRLKRPVNDGTHIAPLSLPSNPPSVGSVCRIMGWGSITTTKVTYPDVPHCANIKLFDYSVCRDAYKGLPEKSRTLCAGILEGGIDSCKVDNGGPLICNGQFQGIGSWEGHPCAQPLKPALYTNVFEYTDWIEGIIARNTTVTCPP</sequence>
<comment type="function">
    <text evidence="6">Snake venom serine protease homolog that may act in the hemostasis system of the prey.</text>
</comment>
<comment type="subcellular location">
    <subcellularLocation>
        <location evidence="4">Secreted</location>
    </subcellularLocation>
</comment>
<comment type="tissue specificity">
    <text evidence="7">Expressed by the venom gland.</text>
</comment>
<comment type="similarity">
    <text evidence="6">Belongs to the peptidase S1 family. Snake venom subfamily.</text>
</comment>
<comment type="caution">
    <text evidence="6">Lacks the conserved His residue in position 66 and the conserved Ser residue in position 205 essential for protease activity.</text>
</comment>
<organism evidence="9">
    <name type="scientific">Bitis rhinoceros</name>
    <name type="common">West African gaboon viper</name>
    <name type="synonym">Vipera rhinoceros</name>
    <dbReference type="NCBI Taxonomy" id="715877"/>
    <lineage>
        <taxon>Eukaryota</taxon>
        <taxon>Metazoa</taxon>
        <taxon>Chordata</taxon>
        <taxon>Craniata</taxon>
        <taxon>Vertebrata</taxon>
        <taxon>Euteleostomi</taxon>
        <taxon>Lepidosauria</taxon>
        <taxon>Squamata</taxon>
        <taxon>Bifurcata</taxon>
        <taxon>Unidentata</taxon>
        <taxon>Episquamata</taxon>
        <taxon>Toxicofera</taxon>
        <taxon>Serpentes</taxon>
        <taxon>Colubroidea</taxon>
        <taxon>Viperidae</taxon>
        <taxon>Viperinae</taxon>
        <taxon>Bitis</taxon>
    </lineage>
</organism>